<evidence type="ECO:0000255" key="1">
    <source>
        <dbReference type="HAMAP-Rule" id="MF_01394"/>
    </source>
</evidence>
<reference key="1">
    <citation type="journal article" date="2006" name="BMC Evol. Biol.">
        <title>Complete plastid genome sequences of Drimys, Liriodendron, and Piper: implications for the phylogenetic relationships of magnoliids.</title>
        <authorList>
            <person name="Cai Z."/>
            <person name="Penaflor C."/>
            <person name="Kuehl J.V."/>
            <person name="Leebens-Mack J."/>
            <person name="Carlson J.E."/>
            <person name="dePamphilis C.W."/>
            <person name="Boore J.L."/>
            <person name="Jansen R.K."/>
        </authorList>
    </citation>
    <scope>NUCLEOTIDE SEQUENCE [LARGE SCALE GENOMIC DNA]</scope>
</reference>
<comment type="function">
    <text evidence="1">NDH shuttles electrons from NAD(P)H:plastoquinone, via FMN and iron-sulfur (Fe-S) centers, to quinones in the photosynthetic chain and possibly in a chloroplast respiratory chain. The immediate electron acceptor for the enzyme in this species is believed to be plastoquinone. Couples the redox reaction to proton translocation, and thus conserves the redox energy in a proton gradient.</text>
</comment>
<comment type="catalytic activity">
    <reaction evidence="1">
        <text>a plastoquinone + NADH + (n+1) H(+)(in) = a plastoquinol + NAD(+) + n H(+)(out)</text>
        <dbReference type="Rhea" id="RHEA:42608"/>
        <dbReference type="Rhea" id="RHEA-COMP:9561"/>
        <dbReference type="Rhea" id="RHEA-COMP:9562"/>
        <dbReference type="ChEBI" id="CHEBI:15378"/>
        <dbReference type="ChEBI" id="CHEBI:17757"/>
        <dbReference type="ChEBI" id="CHEBI:57540"/>
        <dbReference type="ChEBI" id="CHEBI:57945"/>
        <dbReference type="ChEBI" id="CHEBI:62192"/>
    </reaction>
</comment>
<comment type="catalytic activity">
    <reaction evidence="1">
        <text>a plastoquinone + NADPH + (n+1) H(+)(in) = a plastoquinol + NADP(+) + n H(+)(out)</text>
        <dbReference type="Rhea" id="RHEA:42612"/>
        <dbReference type="Rhea" id="RHEA-COMP:9561"/>
        <dbReference type="Rhea" id="RHEA-COMP:9562"/>
        <dbReference type="ChEBI" id="CHEBI:15378"/>
        <dbReference type="ChEBI" id="CHEBI:17757"/>
        <dbReference type="ChEBI" id="CHEBI:57783"/>
        <dbReference type="ChEBI" id="CHEBI:58349"/>
        <dbReference type="ChEBI" id="CHEBI:62192"/>
    </reaction>
</comment>
<comment type="subunit">
    <text evidence="1">NDH is composed of at least 16 different subunits, 5 of which are encoded in the nucleus.</text>
</comment>
<comment type="subcellular location">
    <subcellularLocation>
        <location evidence="1">Plastid</location>
        <location evidence="1">Chloroplast thylakoid membrane</location>
        <topology evidence="1">Multi-pass membrane protein</topology>
    </subcellularLocation>
</comment>
<comment type="similarity">
    <text evidence="1">Belongs to the complex I subunit 3 family.</text>
</comment>
<accession>Q0G9L4</accession>
<feature type="chain" id="PRO_0000362846" description="NAD(P)H-quinone oxidoreductase subunit 3, chloroplastic">
    <location>
        <begin position="1"/>
        <end position="120"/>
    </location>
</feature>
<feature type="transmembrane region" description="Helical" evidence="1">
    <location>
        <begin position="9"/>
        <end position="29"/>
    </location>
</feature>
<feature type="transmembrane region" description="Helical" evidence="1">
    <location>
        <begin position="64"/>
        <end position="84"/>
    </location>
</feature>
<feature type="transmembrane region" description="Helical" evidence="1">
    <location>
        <begin position="88"/>
        <end position="108"/>
    </location>
</feature>
<keyword id="KW-0150">Chloroplast</keyword>
<keyword id="KW-0472">Membrane</keyword>
<keyword id="KW-0520">NAD</keyword>
<keyword id="KW-0521">NADP</keyword>
<keyword id="KW-0934">Plastid</keyword>
<keyword id="KW-0618">Plastoquinone</keyword>
<keyword id="KW-0874">Quinone</keyword>
<keyword id="KW-0793">Thylakoid</keyword>
<keyword id="KW-1278">Translocase</keyword>
<keyword id="KW-0812">Transmembrane</keyword>
<keyword id="KW-1133">Transmembrane helix</keyword>
<keyword id="KW-0813">Transport</keyword>
<geneLocation type="chloroplast"/>
<sequence length="120" mass="13727">MFLLHEYDIFWAFLIISSVIPILAFLISGVLAPISEGPEKLSSYESGIEPMGDAWLQFRIRYYMFALVFVVFDVETVFLYPWAMSFDVLGVSVFIEALIFVLIPIVGSVYAWRKGALEWS</sequence>
<organism>
    <name type="scientific">Liriodendron tulipifera</name>
    <name type="common">Tuliptree</name>
    <name type="synonym">Tulip poplar</name>
    <dbReference type="NCBI Taxonomy" id="3415"/>
    <lineage>
        <taxon>Eukaryota</taxon>
        <taxon>Viridiplantae</taxon>
        <taxon>Streptophyta</taxon>
        <taxon>Embryophyta</taxon>
        <taxon>Tracheophyta</taxon>
        <taxon>Spermatophyta</taxon>
        <taxon>Magnoliopsida</taxon>
        <taxon>Magnoliidae</taxon>
        <taxon>Magnoliales</taxon>
        <taxon>Magnoliaceae</taxon>
        <taxon>Liriodendron</taxon>
    </lineage>
</organism>
<proteinExistence type="inferred from homology"/>
<dbReference type="EC" id="7.1.1.-" evidence="1"/>
<dbReference type="EMBL" id="DQ899947">
    <property type="protein sequence ID" value="ABI32514.1"/>
    <property type="molecule type" value="Genomic_DNA"/>
</dbReference>
<dbReference type="RefSeq" id="YP_740207.1">
    <property type="nucleotide sequence ID" value="NC_008326.1"/>
</dbReference>
<dbReference type="SMR" id="Q0G9L4"/>
<dbReference type="GeneID" id="4266627"/>
<dbReference type="GO" id="GO:0009535">
    <property type="term" value="C:chloroplast thylakoid membrane"/>
    <property type="evidence" value="ECO:0007669"/>
    <property type="project" value="UniProtKB-SubCell"/>
</dbReference>
<dbReference type="GO" id="GO:0030964">
    <property type="term" value="C:NADH dehydrogenase complex"/>
    <property type="evidence" value="ECO:0007669"/>
    <property type="project" value="TreeGrafter"/>
</dbReference>
<dbReference type="GO" id="GO:0008137">
    <property type="term" value="F:NADH dehydrogenase (ubiquinone) activity"/>
    <property type="evidence" value="ECO:0007669"/>
    <property type="project" value="InterPro"/>
</dbReference>
<dbReference type="GO" id="GO:0048038">
    <property type="term" value="F:quinone binding"/>
    <property type="evidence" value="ECO:0007669"/>
    <property type="project" value="UniProtKB-KW"/>
</dbReference>
<dbReference type="GO" id="GO:0019684">
    <property type="term" value="P:photosynthesis, light reaction"/>
    <property type="evidence" value="ECO:0007669"/>
    <property type="project" value="UniProtKB-UniRule"/>
</dbReference>
<dbReference type="FunFam" id="1.20.58.1610:FF:000001">
    <property type="entry name" value="NAD(P)H-quinone oxidoreductase subunit 3, chloroplastic"/>
    <property type="match status" value="1"/>
</dbReference>
<dbReference type="Gene3D" id="1.20.58.1610">
    <property type="entry name" value="NADH:ubiquinone/plastoquinone oxidoreductase, chain 3"/>
    <property type="match status" value="1"/>
</dbReference>
<dbReference type="HAMAP" id="MF_01394">
    <property type="entry name" value="NDH1_NuoA"/>
    <property type="match status" value="1"/>
</dbReference>
<dbReference type="InterPro" id="IPR023043">
    <property type="entry name" value="NAD(P)H_OxRDtase_bac/plastid"/>
</dbReference>
<dbReference type="InterPro" id="IPR000440">
    <property type="entry name" value="NADH_UbQ/plastoQ_OxRdtase_su3"/>
</dbReference>
<dbReference type="InterPro" id="IPR038430">
    <property type="entry name" value="NDAH_ubi_oxred_su3_sf"/>
</dbReference>
<dbReference type="PANTHER" id="PTHR11058">
    <property type="entry name" value="NADH-UBIQUINONE OXIDOREDUCTASE CHAIN 3"/>
    <property type="match status" value="1"/>
</dbReference>
<dbReference type="PANTHER" id="PTHR11058:SF9">
    <property type="entry name" value="NADH-UBIQUINONE OXIDOREDUCTASE CHAIN 3"/>
    <property type="match status" value="1"/>
</dbReference>
<dbReference type="Pfam" id="PF00507">
    <property type="entry name" value="Oxidored_q4"/>
    <property type="match status" value="1"/>
</dbReference>
<name>NU3C_LIRTU</name>
<protein>
    <recommendedName>
        <fullName evidence="1">NAD(P)H-quinone oxidoreductase subunit 3, chloroplastic</fullName>
        <ecNumber evidence="1">7.1.1.-</ecNumber>
    </recommendedName>
    <alternativeName>
        <fullName evidence="1">NAD(P)H dehydrogenase subunit 3</fullName>
    </alternativeName>
    <alternativeName>
        <fullName evidence="1">NADH-plastoquinone oxidoreductase subunit 3</fullName>
    </alternativeName>
</protein>
<gene>
    <name evidence="1" type="primary">ndhC</name>
</gene>